<proteinExistence type="inferred from homology"/>
<sequence length="423" mass="47990">MKKPIGKILWRGLGPLLIAIILVAALMLVPFKFGRSSQATIRQAASSMSANVLKGETIKNEAMAENYVPFIGSSELSRMDAFHPSVLAQKYHRDYRPFLMGMAGSQSLTHFLSINALTHVEGKKAVMVLSPQWFVPGGVRKAQFDYFYSPAQMTTFLLHANPNSEADRFAARRLLQFPSTDSDRTVNEALKNIAAGQKLSDGQYWYLKQVKDPMADHQDALFSRLFLNNNQPQLDKAAKTLPSTYDVDDLDGLATRMGMQETTNNPFELKNDFYTKRVKRNMPKLKGSQATWSYVKSPEYSDLQLVLNTFAKKHMEVLFVIPPINAKWAAFTGLDLGMIQNTVTKMKYQLKTQGFNHVLDLSQDGAQPYFMEDTIHIGWRGWLKMDQTVRPFLKTTKAAPVHYKLNDQFYTKHWQQQSANGLD</sequence>
<reference key="1">
    <citation type="journal article" date="2000" name="J. Bacteriol.">
        <title>Biosynthesis of lipoteichoic acid in Lactobacillus rhamnosus: role of DltD in D-alanylation.</title>
        <authorList>
            <person name="Debabov D.V."/>
            <person name="Kiriukhin M.Y."/>
            <person name="Neuhaus F.C."/>
        </authorList>
    </citation>
    <scope>NUCLEOTIDE SEQUENCE [GENOMIC DNA]</scope>
    <scope>FUNCTION</scope>
    <scope>SUBCELLULAR LOCATION</scope>
    <scope>PATHWAY</scope>
    <source>
        <strain>ATCC 7469 / DSM 20021 / JCM 1136 / CCUG 21452 / KCTC 1046 / NCDO 243 / NCIMB 6375 / NCTC 12953</strain>
    </source>
</reference>
<reference key="2">
    <citation type="journal article" date="1996" name="J. Bacteriol.">
        <title>The D-alanyl carrier protein in Lactobacillus casei: cloning, sequencing, and expression of dltC.</title>
        <authorList>
            <person name="Debabov D.V."/>
            <person name="Heaton M.P."/>
            <person name="Zhang Q."/>
            <person name="Stewart K."/>
            <person name="Lambalot R.H."/>
            <person name="Neuhaus F.C."/>
        </authorList>
    </citation>
    <scope>NUCLEOTIDE SEQUENCE [GENOMIC DNA] OF 1-161</scope>
    <source>
        <strain>ATCC 7469 / DSM 20021 / JCM 1136 / CCUG 21452 / KCTC 1046 / NCDO 243 / NCIMB 6375 / NCTC 12953</strain>
    </source>
</reference>
<dbReference type="EMBL" id="AF192553">
    <property type="protein sequence ID" value="AAF09204.1"/>
    <property type="molecule type" value="Genomic_DNA"/>
</dbReference>
<dbReference type="EMBL" id="U43894">
    <property type="protein sequence ID" value="AAB17660.1"/>
    <property type="molecule type" value="Genomic_DNA"/>
</dbReference>
<dbReference type="SMR" id="P55154"/>
<dbReference type="STRING" id="47715.AWJ15_13960"/>
<dbReference type="eggNOG" id="COG3966">
    <property type="taxonomic scope" value="Bacteria"/>
</dbReference>
<dbReference type="UniPathway" id="UPA00556"/>
<dbReference type="GO" id="GO:0005886">
    <property type="term" value="C:plasma membrane"/>
    <property type="evidence" value="ECO:0007669"/>
    <property type="project" value="UniProtKB-SubCell"/>
</dbReference>
<dbReference type="GO" id="GO:0070395">
    <property type="term" value="P:lipoteichoic acid biosynthetic process"/>
    <property type="evidence" value="ECO:0007669"/>
    <property type="project" value="UniProtKB-UniPathway"/>
</dbReference>
<dbReference type="InterPro" id="IPR006998">
    <property type="entry name" value="DltD"/>
</dbReference>
<dbReference type="InterPro" id="IPR023896">
    <property type="entry name" value="LTA_DltD"/>
</dbReference>
<dbReference type="NCBIfam" id="TIGR04092">
    <property type="entry name" value="LTA_DltD"/>
    <property type="match status" value="1"/>
</dbReference>
<dbReference type="PANTHER" id="PTHR40039">
    <property type="entry name" value="PROTEIN DLTD"/>
    <property type="match status" value="1"/>
</dbReference>
<dbReference type="PANTHER" id="PTHR40039:SF1">
    <property type="entry name" value="PROTEIN DLTD"/>
    <property type="match status" value="1"/>
</dbReference>
<dbReference type="Pfam" id="PF04914">
    <property type="entry name" value="DltD"/>
    <property type="match status" value="1"/>
</dbReference>
<dbReference type="PIRSF" id="PIRSF021438">
    <property type="entry name" value="DltD"/>
    <property type="match status" value="1"/>
</dbReference>
<gene>
    <name type="primary">dltD</name>
</gene>
<evidence type="ECO:0000250" key="1">
    <source>
        <dbReference type="UniProtKB" id="P39578"/>
    </source>
</evidence>
<evidence type="ECO:0000250" key="2">
    <source>
        <dbReference type="UniProtKB" id="Q2FZW3"/>
    </source>
</evidence>
<evidence type="ECO:0000255" key="3"/>
<evidence type="ECO:0000269" key="4">
    <source>
    </source>
</evidence>
<evidence type="ECO:0000305" key="5"/>
<evidence type="ECO:0000305" key="6">
    <source>
    </source>
</evidence>
<keyword id="KW-1003">Cell membrane</keyword>
<keyword id="KW-0472">Membrane</keyword>
<keyword id="KW-0735">Signal-anchor</keyword>
<keyword id="KW-0812">Transmembrane</keyword>
<keyword id="KW-1133">Transmembrane helix</keyword>
<protein>
    <recommendedName>
        <fullName>Protein DltD</fullName>
    </recommendedName>
</protein>
<name>DLTD_LACRH</name>
<accession>P55154</accession>
<accession>Q9RMN7</accession>
<feature type="chain" id="PRO_0000021108" description="Protein DltD">
    <location>
        <begin position="1"/>
        <end position="423"/>
    </location>
</feature>
<feature type="topological domain" description="Cytoplasmic" evidence="2">
    <location>
        <begin position="1"/>
        <end position="12"/>
    </location>
</feature>
<feature type="transmembrane region" description="Helical; Signal-anchor for type II membrane protein" evidence="3">
    <location>
        <begin position="13"/>
        <end position="33"/>
    </location>
</feature>
<feature type="topological domain" description="Extracellular" evidence="2">
    <location>
        <begin position="34"/>
        <end position="423"/>
    </location>
</feature>
<feature type="sequence conflict" description="In Ref. 2; AAB17660." evidence="5" ref="2">
    <original>E</original>
    <variation>D</variation>
    <location>
        <position position="65"/>
    </location>
</feature>
<feature type="sequence conflict" description="In Ref. 2; AAB17660." evidence="5" ref="2">
    <original>V</original>
    <variation>L</variation>
    <location>
        <position position="139"/>
    </location>
</feature>
<comment type="function">
    <text evidence="1 6">Involved in the D-alanylation of lipoteichoic acid (LTA). Could be responsible for the transfer of DltC-carried D-alanyl groups to cell membrane phosphatidylglycerol (PG), or alternatively of D-alanine residues from D-Ala-undecaprenol phosphate to the poly(glycerophosphate) chains of LTA. D-alanylation of LTA plays an important role in modulating the properties of the cell wall in Gram-positive bacteria, influencing the net charge of the cell wall.</text>
</comment>
<comment type="pathway">
    <text evidence="6">Cell wall biogenesis; lipoteichoic acid biosynthesis.</text>
</comment>
<comment type="subcellular location">
    <subcellularLocation>
        <location evidence="4">Cell membrane</location>
        <topology evidence="4">Single-pass type II membrane protein</topology>
        <orientation evidence="2">Extracellular side</orientation>
    </subcellularLocation>
</comment>
<comment type="similarity">
    <text evidence="5">Belongs to the DltD family.</text>
</comment>
<organism>
    <name type="scientific">Lacticaseibacillus rhamnosus</name>
    <name type="common">Lactobacillus rhamnosus</name>
    <dbReference type="NCBI Taxonomy" id="47715"/>
    <lineage>
        <taxon>Bacteria</taxon>
        <taxon>Bacillati</taxon>
        <taxon>Bacillota</taxon>
        <taxon>Bacilli</taxon>
        <taxon>Lactobacillales</taxon>
        <taxon>Lactobacillaceae</taxon>
        <taxon>Lacticaseibacillus</taxon>
    </lineage>
</organism>